<reference key="1">
    <citation type="journal article" date="2002" name="Mol. Microbiol.">
        <title>Genome sequence of Streptococcus agalactiae, a pathogen causing invasive neonatal disease.</title>
        <authorList>
            <person name="Glaser P."/>
            <person name="Rusniok C."/>
            <person name="Buchrieser C."/>
            <person name="Chevalier F."/>
            <person name="Frangeul L."/>
            <person name="Msadek T."/>
            <person name="Zouine M."/>
            <person name="Couve E."/>
            <person name="Lalioui L."/>
            <person name="Poyart C."/>
            <person name="Trieu-Cuot P."/>
            <person name="Kunst F."/>
        </authorList>
    </citation>
    <scope>NUCLEOTIDE SEQUENCE [LARGE SCALE GENOMIC DNA]</scope>
    <source>
        <strain>NEM316</strain>
    </source>
</reference>
<dbReference type="EMBL" id="AL766856">
    <property type="protein sequence ID" value="CAD47702.1"/>
    <property type="molecule type" value="Genomic_DNA"/>
</dbReference>
<dbReference type="RefSeq" id="WP_000940932.1">
    <property type="nucleotide sequence ID" value="NC_004368.1"/>
</dbReference>
<dbReference type="KEGG" id="san:gbs2043"/>
<dbReference type="eggNOG" id="COG3906">
    <property type="taxonomic scope" value="Bacteria"/>
</dbReference>
<dbReference type="HOGENOM" id="CLU_146610_2_1_9"/>
<dbReference type="Proteomes" id="UP000000823">
    <property type="component" value="Chromosome"/>
</dbReference>
<dbReference type="HAMAP" id="MF_01448">
    <property type="entry name" value="UPF0473"/>
    <property type="match status" value="1"/>
</dbReference>
<dbReference type="InterPro" id="IPR009711">
    <property type="entry name" value="UPF0473"/>
</dbReference>
<dbReference type="NCBIfam" id="NF010215">
    <property type="entry name" value="PRK13678.1-2"/>
    <property type="match status" value="1"/>
</dbReference>
<dbReference type="NCBIfam" id="NF010217">
    <property type="entry name" value="PRK13678.1-4"/>
    <property type="match status" value="1"/>
</dbReference>
<dbReference type="PANTHER" id="PTHR40066">
    <property type="entry name" value="UPF0473 PROTEIN CBO2561/CLC_2432"/>
    <property type="match status" value="1"/>
</dbReference>
<dbReference type="PANTHER" id="PTHR40066:SF1">
    <property type="entry name" value="UPF0473 PROTEIN CBO2561_CLC_2432"/>
    <property type="match status" value="1"/>
</dbReference>
<dbReference type="Pfam" id="PF06949">
    <property type="entry name" value="DUF1292"/>
    <property type="match status" value="1"/>
</dbReference>
<feature type="chain" id="PRO_0000304854" description="UPF0473 protein gbs2043">
    <location>
        <begin position="1"/>
        <end position="105"/>
    </location>
</feature>
<name>Y2043_STRA3</name>
<gene>
    <name type="ordered locus">gbs2043</name>
</gene>
<comment type="similarity">
    <text evidence="1">Belongs to the UPF0473 family.</text>
</comment>
<accession>Q8E2S4</accession>
<evidence type="ECO:0000255" key="1">
    <source>
        <dbReference type="HAMAP-Rule" id="MF_01448"/>
    </source>
</evidence>
<proteinExistence type="inferred from homology"/>
<protein>
    <recommendedName>
        <fullName evidence="1">UPF0473 protein gbs2043</fullName>
    </recommendedName>
</protein>
<sequence>MAHNHNHDHNHEHQHEVITLVDENGNETLFEILLTIDGREEFGKNYVLLVPAGAEEDEQGEIEIQAYSFTENADGTEGDLQPIPEDSDAEWDMIEEVFNSFLDEE</sequence>
<organism>
    <name type="scientific">Streptococcus agalactiae serotype III (strain NEM316)</name>
    <dbReference type="NCBI Taxonomy" id="211110"/>
    <lineage>
        <taxon>Bacteria</taxon>
        <taxon>Bacillati</taxon>
        <taxon>Bacillota</taxon>
        <taxon>Bacilli</taxon>
        <taxon>Lactobacillales</taxon>
        <taxon>Streptococcaceae</taxon>
        <taxon>Streptococcus</taxon>
    </lineage>
</organism>